<feature type="chain" id="PRO_0000142152" description="Imidazole glycerol phosphate synthase subunit HisF">
    <location>
        <begin position="1"/>
        <end position="253"/>
    </location>
</feature>
<feature type="active site" evidence="1">
    <location>
        <position position="11"/>
    </location>
</feature>
<feature type="active site" evidence="1">
    <location>
        <position position="130"/>
    </location>
</feature>
<gene>
    <name evidence="1" type="primary">hisF</name>
    <name type="ordered locus">cbdbA1057</name>
</gene>
<name>HIS6_DEHMC</name>
<accession>Q3ZY29</accession>
<sequence length="253" mass="27234">MLNKRVIPCLDVNNGRVVKGTSFVNLRDAGDPVELAARYYREGADELVFLDISATTEERKTMAEVVEKVSKEVFIPLCVGGGLRSIADMTTLLRAGADKVSVNSAAVSDPDLISRGAEKFGRQCIVVAIDAKREGNSWQVYTHSGKKPTGLDAVEWAMKAEQLGAGEILLTSIDADGKNTGYDNELNREVGSRLNIPVIASGGAGSPEDLYNALDKGQADAVLAASIFHYGRYSIAEVKKYLKSKGLPVRLEN</sequence>
<organism>
    <name type="scientific">Dehalococcoides mccartyi (strain CBDB1)</name>
    <dbReference type="NCBI Taxonomy" id="255470"/>
    <lineage>
        <taxon>Bacteria</taxon>
        <taxon>Bacillati</taxon>
        <taxon>Chloroflexota</taxon>
        <taxon>Dehalococcoidia</taxon>
        <taxon>Dehalococcoidales</taxon>
        <taxon>Dehalococcoidaceae</taxon>
        <taxon>Dehalococcoides</taxon>
    </lineage>
</organism>
<evidence type="ECO:0000255" key="1">
    <source>
        <dbReference type="HAMAP-Rule" id="MF_01013"/>
    </source>
</evidence>
<protein>
    <recommendedName>
        <fullName evidence="1">Imidazole glycerol phosphate synthase subunit HisF</fullName>
        <ecNumber evidence="1">4.3.2.10</ecNumber>
    </recommendedName>
    <alternativeName>
        <fullName evidence="1">IGP synthase cyclase subunit</fullName>
    </alternativeName>
    <alternativeName>
        <fullName evidence="1">IGP synthase subunit HisF</fullName>
    </alternativeName>
    <alternativeName>
        <fullName evidence="1">ImGP synthase subunit HisF</fullName>
        <shortName evidence="1">IGPS subunit HisF</shortName>
    </alternativeName>
</protein>
<comment type="function">
    <text evidence="1">IGPS catalyzes the conversion of PRFAR and glutamine to IGP, AICAR and glutamate. The HisF subunit catalyzes the cyclization activity that produces IGP and AICAR from PRFAR using the ammonia provided by the HisH subunit.</text>
</comment>
<comment type="catalytic activity">
    <reaction evidence="1">
        <text>5-[(5-phospho-1-deoxy-D-ribulos-1-ylimino)methylamino]-1-(5-phospho-beta-D-ribosyl)imidazole-4-carboxamide + L-glutamine = D-erythro-1-(imidazol-4-yl)glycerol 3-phosphate + 5-amino-1-(5-phospho-beta-D-ribosyl)imidazole-4-carboxamide + L-glutamate + H(+)</text>
        <dbReference type="Rhea" id="RHEA:24793"/>
        <dbReference type="ChEBI" id="CHEBI:15378"/>
        <dbReference type="ChEBI" id="CHEBI:29985"/>
        <dbReference type="ChEBI" id="CHEBI:58278"/>
        <dbReference type="ChEBI" id="CHEBI:58359"/>
        <dbReference type="ChEBI" id="CHEBI:58475"/>
        <dbReference type="ChEBI" id="CHEBI:58525"/>
        <dbReference type="EC" id="4.3.2.10"/>
    </reaction>
</comment>
<comment type="pathway">
    <text evidence="1">Amino-acid biosynthesis; L-histidine biosynthesis; L-histidine from 5-phospho-alpha-D-ribose 1-diphosphate: step 5/9.</text>
</comment>
<comment type="subunit">
    <text evidence="1">Heterodimer of HisH and HisF.</text>
</comment>
<comment type="subcellular location">
    <subcellularLocation>
        <location evidence="1">Cytoplasm</location>
    </subcellularLocation>
</comment>
<comment type="similarity">
    <text evidence="1">Belongs to the HisA/HisF family.</text>
</comment>
<dbReference type="EC" id="4.3.2.10" evidence="1"/>
<dbReference type="EMBL" id="AJ965256">
    <property type="protein sequence ID" value="CAI83161.1"/>
    <property type="molecule type" value="Genomic_DNA"/>
</dbReference>
<dbReference type="RefSeq" id="WP_011309512.1">
    <property type="nucleotide sequence ID" value="NC_007356.1"/>
</dbReference>
<dbReference type="SMR" id="Q3ZY29"/>
<dbReference type="KEGG" id="deh:cbdbA1057"/>
<dbReference type="HOGENOM" id="CLU_048577_4_0_0"/>
<dbReference type="UniPathway" id="UPA00031">
    <property type="reaction ID" value="UER00010"/>
</dbReference>
<dbReference type="Proteomes" id="UP000000433">
    <property type="component" value="Chromosome"/>
</dbReference>
<dbReference type="GO" id="GO:0005737">
    <property type="term" value="C:cytoplasm"/>
    <property type="evidence" value="ECO:0007669"/>
    <property type="project" value="UniProtKB-SubCell"/>
</dbReference>
<dbReference type="GO" id="GO:0000107">
    <property type="term" value="F:imidazoleglycerol-phosphate synthase activity"/>
    <property type="evidence" value="ECO:0007669"/>
    <property type="project" value="UniProtKB-UniRule"/>
</dbReference>
<dbReference type="GO" id="GO:0016829">
    <property type="term" value="F:lyase activity"/>
    <property type="evidence" value="ECO:0007669"/>
    <property type="project" value="UniProtKB-KW"/>
</dbReference>
<dbReference type="GO" id="GO:0000105">
    <property type="term" value="P:L-histidine biosynthetic process"/>
    <property type="evidence" value="ECO:0007669"/>
    <property type="project" value="UniProtKB-UniRule"/>
</dbReference>
<dbReference type="CDD" id="cd04731">
    <property type="entry name" value="HisF"/>
    <property type="match status" value="1"/>
</dbReference>
<dbReference type="FunFam" id="3.20.20.70:FF:000006">
    <property type="entry name" value="Imidazole glycerol phosphate synthase subunit HisF"/>
    <property type="match status" value="1"/>
</dbReference>
<dbReference type="Gene3D" id="3.20.20.70">
    <property type="entry name" value="Aldolase class I"/>
    <property type="match status" value="1"/>
</dbReference>
<dbReference type="HAMAP" id="MF_01013">
    <property type="entry name" value="HisF"/>
    <property type="match status" value="1"/>
</dbReference>
<dbReference type="InterPro" id="IPR013785">
    <property type="entry name" value="Aldolase_TIM"/>
</dbReference>
<dbReference type="InterPro" id="IPR006062">
    <property type="entry name" value="His_biosynth"/>
</dbReference>
<dbReference type="InterPro" id="IPR004651">
    <property type="entry name" value="HisF"/>
</dbReference>
<dbReference type="InterPro" id="IPR050064">
    <property type="entry name" value="IGPS_HisA/HisF"/>
</dbReference>
<dbReference type="InterPro" id="IPR011060">
    <property type="entry name" value="RibuloseP-bd_barrel"/>
</dbReference>
<dbReference type="NCBIfam" id="TIGR00735">
    <property type="entry name" value="hisF"/>
    <property type="match status" value="1"/>
</dbReference>
<dbReference type="PANTHER" id="PTHR21235:SF2">
    <property type="entry name" value="IMIDAZOLE GLYCEROL PHOSPHATE SYNTHASE HISHF"/>
    <property type="match status" value="1"/>
</dbReference>
<dbReference type="PANTHER" id="PTHR21235">
    <property type="entry name" value="IMIDAZOLE GLYCEROL PHOSPHATE SYNTHASE SUBUNIT HISF/H IGP SYNTHASE SUBUNIT HISF/H"/>
    <property type="match status" value="1"/>
</dbReference>
<dbReference type="Pfam" id="PF00977">
    <property type="entry name" value="His_biosynth"/>
    <property type="match status" value="1"/>
</dbReference>
<dbReference type="SUPFAM" id="SSF51366">
    <property type="entry name" value="Ribulose-phoshate binding barrel"/>
    <property type="match status" value="1"/>
</dbReference>
<keyword id="KW-0028">Amino-acid biosynthesis</keyword>
<keyword id="KW-0963">Cytoplasm</keyword>
<keyword id="KW-0368">Histidine biosynthesis</keyword>
<keyword id="KW-0456">Lyase</keyword>
<reference key="1">
    <citation type="journal article" date="2005" name="Nat. Biotechnol.">
        <title>Genome sequence of the chlorinated compound-respiring bacterium Dehalococcoides species strain CBDB1.</title>
        <authorList>
            <person name="Kube M."/>
            <person name="Beck A."/>
            <person name="Zinder S.H."/>
            <person name="Kuhl H."/>
            <person name="Reinhardt R."/>
            <person name="Adrian L."/>
        </authorList>
    </citation>
    <scope>NUCLEOTIDE SEQUENCE [LARGE SCALE GENOMIC DNA]</scope>
    <source>
        <strain>CBDB1</strain>
    </source>
</reference>
<proteinExistence type="inferred from homology"/>